<organism>
    <name type="scientific">Vaccinia virus (strain Western Reserve)</name>
    <name type="common">VACV</name>
    <name type="synonym">Vaccinia virus (strain WR)</name>
    <dbReference type="NCBI Taxonomy" id="10254"/>
    <lineage>
        <taxon>Viruses</taxon>
        <taxon>Varidnaviria</taxon>
        <taxon>Bamfordvirae</taxon>
        <taxon>Nucleocytoviricota</taxon>
        <taxon>Pokkesviricetes</taxon>
        <taxon>Chitovirales</taxon>
        <taxon>Poxviridae</taxon>
        <taxon>Chordopoxvirinae</taxon>
        <taxon>Orthopoxvirus</taxon>
        <taxon>Vaccinia virus</taxon>
    </lineage>
</organism>
<gene>
    <name type="ordered locus">VACWR017</name>
</gene>
<protein>
    <recommendedName>
        <fullName>Uncharacterized protein 17</fullName>
    </recommendedName>
</protein>
<sequence length="71" mass="8526">MFDYLENEEVALDELKQMLRDRDPNDTRNQFKNNALHAYLFNEHCNNVEVVKLLLDSGTNPLRKNWRQLPH</sequence>
<feature type="chain" id="PRO_0000099417" description="Uncharacterized protein 17">
    <location>
        <begin position="1"/>
        <end position="71"/>
    </location>
</feature>
<proteinExistence type="predicted"/>
<reference key="1">
    <citation type="journal article" date="1988" name="Virology">
        <title>Analysis of a large cluster of nonessential genes deleted from a vaccinia virus terminal transposition mutant.</title>
        <authorList>
            <person name="Kotwal G.J."/>
            <person name="Moss B."/>
        </authorList>
    </citation>
    <scope>NUCLEOTIDE SEQUENCE [GENOMIC DNA]</scope>
</reference>
<reference key="2">
    <citation type="submission" date="2003-02" db="EMBL/GenBank/DDBJ databases">
        <title>Sequencing of the coding region of Vaccinia-WR to an average 9-fold redundancy and an error rate of 0.16/10kb.</title>
        <authorList>
            <person name="Esposito J.J."/>
            <person name="Frace A.M."/>
            <person name="Sammons S.A."/>
            <person name="Olsen-Rasmussen M."/>
            <person name="Osborne J."/>
            <person name="Wohlhueter R."/>
        </authorList>
    </citation>
    <scope>NUCLEOTIDE SEQUENCE [GENOMIC DNA]</scope>
</reference>
<keyword id="KW-0244">Early protein</keyword>
<keyword id="KW-1185">Reference proteome</keyword>
<dbReference type="EMBL" id="M22812">
    <property type="protein sequence ID" value="AAA69597.1"/>
    <property type="molecule type" value="Genomic_DNA"/>
</dbReference>
<dbReference type="EMBL" id="AY243312">
    <property type="protein sequence ID" value="AAO89296.1"/>
    <property type="molecule type" value="Genomic_DNA"/>
</dbReference>
<dbReference type="PIR" id="F31829">
    <property type="entry name" value="WZVZA6"/>
</dbReference>
<dbReference type="RefSeq" id="YP_232899.1">
    <property type="nucleotide sequence ID" value="NC_006998.1"/>
</dbReference>
<dbReference type="SMR" id="P17359"/>
<dbReference type="DNASU" id="3707632"/>
<dbReference type="GeneID" id="3707632"/>
<dbReference type="KEGG" id="vg:3707632"/>
<dbReference type="Proteomes" id="UP000000344">
    <property type="component" value="Genome"/>
</dbReference>
<dbReference type="Gene3D" id="1.25.40.20">
    <property type="entry name" value="Ankyrin repeat-containing domain"/>
    <property type="match status" value="1"/>
</dbReference>
<dbReference type="InterPro" id="IPR002110">
    <property type="entry name" value="Ankyrin_rpt"/>
</dbReference>
<dbReference type="InterPro" id="IPR036770">
    <property type="entry name" value="Ankyrin_rpt-contain_sf"/>
</dbReference>
<dbReference type="Pfam" id="PF00023">
    <property type="entry name" value="Ank"/>
    <property type="match status" value="1"/>
</dbReference>
<organismHost>
    <name type="scientific">Bos taurus</name>
    <name type="common">Bovine</name>
    <dbReference type="NCBI Taxonomy" id="9913"/>
</organismHost>
<accession>P17359</accession>
<accession>Q76ZZ0</accession>
<name>V017_VACCW</name>